<reference key="1">
    <citation type="journal article" date="1989" name="Nucleic Acids Res.">
        <title>Two group I introns with long internal open reading frames in the chloroplast psbA gene of Chlamydomonas moewusii.</title>
        <authorList>
            <person name="Turmel M."/>
            <person name="Boulanger J."/>
            <person name="Lemieux C."/>
        </authorList>
    </citation>
    <scope>NUCLEOTIDE SEQUENCE [GENOMIC DNA]</scope>
    <source>
        <strain>UTEX 97</strain>
    </source>
</reference>
<dbReference type="EC" id="1.10.3.9" evidence="1"/>
<dbReference type="EMBL" id="X13486">
    <property type="protein sequence ID" value="CAA31841.1"/>
    <property type="molecule type" value="Genomic_DNA"/>
</dbReference>
<dbReference type="EMBL" id="X15601">
    <property type="protein sequence ID" value="CAA33622.1"/>
    <property type="molecule type" value="Genomic_DNA"/>
</dbReference>
<dbReference type="PIR" id="S04279">
    <property type="entry name" value="F2KM1M"/>
</dbReference>
<dbReference type="SMR" id="P09752"/>
<dbReference type="GO" id="GO:0009535">
    <property type="term" value="C:chloroplast thylakoid membrane"/>
    <property type="evidence" value="ECO:0007669"/>
    <property type="project" value="UniProtKB-SubCell"/>
</dbReference>
<dbReference type="GO" id="GO:0009523">
    <property type="term" value="C:photosystem II"/>
    <property type="evidence" value="ECO:0007669"/>
    <property type="project" value="UniProtKB-KW"/>
</dbReference>
<dbReference type="GO" id="GO:0016168">
    <property type="term" value="F:chlorophyll binding"/>
    <property type="evidence" value="ECO:0007669"/>
    <property type="project" value="UniProtKB-UniRule"/>
</dbReference>
<dbReference type="GO" id="GO:0045156">
    <property type="term" value="F:electron transporter, transferring electrons within the cyclic electron transport pathway of photosynthesis activity"/>
    <property type="evidence" value="ECO:0007669"/>
    <property type="project" value="InterPro"/>
</dbReference>
<dbReference type="GO" id="GO:0005506">
    <property type="term" value="F:iron ion binding"/>
    <property type="evidence" value="ECO:0007669"/>
    <property type="project" value="UniProtKB-UniRule"/>
</dbReference>
<dbReference type="GO" id="GO:0016682">
    <property type="term" value="F:oxidoreductase activity, acting on diphenols and related substances as donors, oxygen as acceptor"/>
    <property type="evidence" value="ECO:0007669"/>
    <property type="project" value="UniProtKB-UniRule"/>
</dbReference>
<dbReference type="GO" id="GO:0010242">
    <property type="term" value="F:oxygen evolving activity"/>
    <property type="evidence" value="ECO:0007669"/>
    <property type="project" value="UniProtKB-EC"/>
</dbReference>
<dbReference type="GO" id="GO:0009772">
    <property type="term" value="P:photosynthetic electron transport in photosystem II"/>
    <property type="evidence" value="ECO:0007669"/>
    <property type="project" value="InterPro"/>
</dbReference>
<dbReference type="GO" id="GO:0009635">
    <property type="term" value="P:response to herbicide"/>
    <property type="evidence" value="ECO:0007669"/>
    <property type="project" value="UniProtKB-KW"/>
</dbReference>
<dbReference type="CDD" id="cd09289">
    <property type="entry name" value="Photosystem-II_D1"/>
    <property type="match status" value="1"/>
</dbReference>
<dbReference type="FunFam" id="1.20.85.10:FF:000002">
    <property type="entry name" value="Photosystem II protein D1"/>
    <property type="match status" value="1"/>
</dbReference>
<dbReference type="Gene3D" id="1.20.85.10">
    <property type="entry name" value="Photosystem II protein D1-like"/>
    <property type="match status" value="1"/>
</dbReference>
<dbReference type="HAMAP" id="MF_01379">
    <property type="entry name" value="PSII_PsbA_D1"/>
    <property type="match status" value="1"/>
</dbReference>
<dbReference type="InterPro" id="IPR055266">
    <property type="entry name" value="D1/D2"/>
</dbReference>
<dbReference type="InterPro" id="IPR036854">
    <property type="entry name" value="Photo_II_D1/D2_sf"/>
</dbReference>
<dbReference type="InterPro" id="IPR000484">
    <property type="entry name" value="Photo_RC_L/M"/>
</dbReference>
<dbReference type="InterPro" id="IPR055265">
    <property type="entry name" value="Photo_RC_L/M_CS"/>
</dbReference>
<dbReference type="InterPro" id="IPR005867">
    <property type="entry name" value="PSII_D1"/>
</dbReference>
<dbReference type="NCBIfam" id="TIGR01151">
    <property type="entry name" value="psbA"/>
    <property type="match status" value="1"/>
</dbReference>
<dbReference type="PANTHER" id="PTHR33149:SF12">
    <property type="entry name" value="PHOTOSYSTEM II D2 PROTEIN"/>
    <property type="match status" value="1"/>
</dbReference>
<dbReference type="PANTHER" id="PTHR33149">
    <property type="entry name" value="PHOTOSYSTEM II PROTEIN D1"/>
    <property type="match status" value="1"/>
</dbReference>
<dbReference type="Pfam" id="PF00124">
    <property type="entry name" value="Photo_RC"/>
    <property type="match status" value="1"/>
</dbReference>
<dbReference type="PRINTS" id="PR00256">
    <property type="entry name" value="REACTNCENTRE"/>
</dbReference>
<dbReference type="SUPFAM" id="SSF81483">
    <property type="entry name" value="Bacterial photosystem II reaction centre, L and M subunits"/>
    <property type="match status" value="1"/>
</dbReference>
<dbReference type="PROSITE" id="PS00244">
    <property type="entry name" value="REACTION_CENTER"/>
    <property type="match status" value="1"/>
</dbReference>
<organism>
    <name type="scientific">Chlamydomonas moewusii</name>
    <name type="common">Chlamydomonas eugametos</name>
    <dbReference type="NCBI Taxonomy" id="3054"/>
    <lineage>
        <taxon>Eukaryota</taxon>
        <taxon>Viridiplantae</taxon>
        <taxon>Chlorophyta</taxon>
        <taxon>core chlorophytes</taxon>
        <taxon>Chlorophyceae</taxon>
        <taxon>CS clade</taxon>
        <taxon>Chlamydomonadales</taxon>
        <taxon>Chlamydomonadaceae</taxon>
        <taxon>Chlamydomonas</taxon>
    </lineage>
</organism>
<name>PSBA_CHLMO</name>
<protein>
    <recommendedName>
        <fullName evidence="1">Photosystem II protein D1</fullName>
        <shortName evidence="1">PSII D1 protein</shortName>
        <ecNumber evidence="1">1.10.3.9</ecNumber>
    </recommendedName>
    <alternativeName>
        <fullName evidence="1">Photosystem II Q(B) protein</fullName>
    </alternativeName>
</protein>
<comment type="function">
    <text evidence="1">Photosystem II (PSII) is a light-driven water:plastoquinone oxidoreductase that uses light energy to abstract electrons from H(2)O, generating O(2) and a proton gradient subsequently used for ATP formation. It consists of a core antenna complex that captures photons, and an electron transfer chain that converts photonic excitation into a charge separation. The D1/D2 (PsbA/PsbD) reaction center heterodimer binds P680, the primary electron donor of PSII as well as several subsequent electron acceptors.</text>
</comment>
<comment type="catalytic activity">
    <reaction evidence="1">
        <text>2 a plastoquinone + 4 hnu + 2 H2O = 2 a plastoquinol + O2</text>
        <dbReference type="Rhea" id="RHEA:36359"/>
        <dbReference type="Rhea" id="RHEA-COMP:9561"/>
        <dbReference type="Rhea" id="RHEA-COMP:9562"/>
        <dbReference type="ChEBI" id="CHEBI:15377"/>
        <dbReference type="ChEBI" id="CHEBI:15379"/>
        <dbReference type="ChEBI" id="CHEBI:17757"/>
        <dbReference type="ChEBI" id="CHEBI:30212"/>
        <dbReference type="ChEBI" id="CHEBI:62192"/>
        <dbReference type="EC" id="1.10.3.9"/>
    </reaction>
</comment>
<comment type="cofactor">
    <text evidence="1">The D1/D2 heterodimer binds P680, chlorophylls that are the primary electron donor of PSII, and subsequent electron acceptors. It shares a non-heme iron and each subunit binds pheophytin, quinone, additional chlorophylls, carotenoids and lipids. D1 provides most of the ligands for the Mn4-Ca-O5 cluster of the oxygen-evolving complex (OEC). There is also a Cl(-1) ion associated with D1 and D2, which is required for oxygen evolution. The PSII complex binds additional chlorophylls, carotenoids and specific lipids.</text>
</comment>
<comment type="subunit">
    <text evidence="1">PSII is composed of 1 copy each of membrane proteins PsbA, PsbB, PsbC, PsbD, PsbE, PsbF, PsbH, PsbI, PsbJ, PsbK, PsbL, PsbM, PsbT, PsbX, PsbY, PsbZ, Psb30/Ycf12, at least 3 peripheral proteins of the oxygen-evolving complex and a large number of cofactors. It forms dimeric complexes.</text>
</comment>
<comment type="subcellular location">
    <subcellularLocation>
        <location evidence="1">Plastid</location>
        <location evidence="1">Chloroplast thylakoid membrane</location>
        <topology evidence="1">Multi-pass membrane protein</topology>
    </subcellularLocation>
</comment>
<comment type="PTM">
    <text evidence="1">Tyr-161 forms a radical intermediate that is referred to as redox-active TyrZ, YZ or Y-Z.</text>
</comment>
<comment type="PTM">
    <text evidence="1">C-terminally processed by CTPA; processing is essential to allow assembly of the oxygen-evolving complex and thus photosynthetic growth.</text>
</comment>
<comment type="miscellaneous">
    <text evidence="1">2 of the reaction center chlorophylls (ChlD1 and ChlD2) are entirely coordinated by water.</text>
</comment>
<comment type="miscellaneous">
    <text evidence="1">Herbicides such as atrazine, BNT, diuron or ioxynil bind in the Q(B) binding site and block subsequent electron transfer.</text>
</comment>
<comment type="similarity">
    <text evidence="1">Belongs to the reaction center PufL/M/PsbA/D family.</text>
</comment>
<accession>P09752</accession>
<feature type="initiator methionine" description="Removed" evidence="1">
    <location>
        <position position="1"/>
    </location>
</feature>
<feature type="chain" id="PRO_0000090431" description="Photosystem II protein D1" evidence="1">
    <location>
        <begin position="2"/>
        <end position="344"/>
    </location>
</feature>
<feature type="propeptide" id="PRO_0000316442" evidence="1">
    <location>
        <begin position="345"/>
        <end position="353"/>
    </location>
</feature>
<feature type="transmembrane region" description="Helical" evidence="1">
    <location>
        <begin position="29"/>
        <end position="46"/>
    </location>
</feature>
<feature type="transmembrane region" description="Helical" evidence="1">
    <location>
        <begin position="118"/>
        <end position="133"/>
    </location>
</feature>
<feature type="transmembrane region" description="Helical" evidence="1">
    <location>
        <begin position="142"/>
        <end position="156"/>
    </location>
</feature>
<feature type="transmembrane region" description="Helical" evidence="1">
    <location>
        <begin position="197"/>
        <end position="218"/>
    </location>
</feature>
<feature type="transmembrane region" description="Helical" evidence="1">
    <location>
        <begin position="274"/>
        <end position="288"/>
    </location>
</feature>
<feature type="binding site" description="axial binding residue" evidence="1">
    <location>
        <position position="118"/>
    </location>
    <ligand>
        <name>chlorophyll a</name>
        <dbReference type="ChEBI" id="CHEBI:58416"/>
        <label>ChlzD1</label>
    </ligand>
    <ligandPart>
        <name>Mg</name>
        <dbReference type="ChEBI" id="CHEBI:25107"/>
    </ligandPart>
</feature>
<feature type="binding site" evidence="1">
    <location>
        <position position="126"/>
    </location>
    <ligand>
        <name>pheophytin a</name>
        <dbReference type="ChEBI" id="CHEBI:136840"/>
        <label>D1</label>
    </ligand>
</feature>
<feature type="binding site" evidence="1">
    <location>
        <position position="170"/>
    </location>
    <ligand>
        <name>[CaMn4O5] cluster</name>
        <dbReference type="ChEBI" id="CHEBI:189552"/>
    </ligand>
</feature>
<feature type="binding site" evidence="1">
    <location>
        <position position="189"/>
    </location>
    <ligand>
        <name>[CaMn4O5] cluster</name>
        <dbReference type="ChEBI" id="CHEBI:189552"/>
    </ligand>
</feature>
<feature type="binding site" description="axial binding residue" evidence="1">
    <location>
        <position position="198"/>
    </location>
    <ligand>
        <name>chlorophyll a</name>
        <dbReference type="ChEBI" id="CHEBI:58416"/>
        <label>PD1</label>
    </ligand>
    <ligandPart>
        <name>Mg</name>
        <dbReference type="ChEBI" id="CHEBI:25107"/>
    </ligandPart>
</feature>
<feature type="binding site" evidence="1">
    <location>
        <position position="215"/>
    </location>
    <ligand>
        <name>a quinone</name>
        <dbReference type="ChEBI" id="CHEBI:132124"/>
        <label>B</label>
    </ligand>
</feature>
<feature type="binding site" evidence="1">
    <location>
        <position position="215"/>
    </location>
    <ligand>
        <name>Fe cation</name>
        <dbReference type="ChEBI" id="CHEBI:24875"/>
        <note>ligand shared with heterodimeric partner</note>
    </ligand>
</feature>
<feature type="binding site" evidence="1">
    <location>
        <begin position="264"/>
        <end position="265"/>
    </location>
    <ligand>
        <name>a quinone</name>
        <dbReference type="ChEBI" id="CHEBI:132124"/>
        <label>B</label>
    </ligand>
</feature>
<feature type="binding site" evidence="1">
    <location>
        <position position="272"/>
    </location>
    <ligand>
        <name>Fe cation</name>
        <dbReference type="ChEBI" id="CHEBI:24875"/>
        <note>ligand shared with heterodimeric partner</note>
    </ligand>
</feature>
<feature type="binding site" evidence="1">
    <location>
        <position position="332"/>
    </location>
    <ligand>
        <name>[CaMn4O5] cluster</name>
        <dbReference type="ChEBI" id="CHEBI:189552"/>
    </ligand>
</feature>
<feature type="binding site" evidence="1">
    <location>
        <position position="333"/>
    </location>
    <ligand>
        <name>[CaMn4O5] cluster</name>
        <dbReference type="ChEBI" id="CHEBI:189552"/>
    </ligand>
</feature>
<feature type="binding site" evidence="1">
    <location>
        <position position="342"/>
    </location>
    <ligand>
        <name>[CaMn4O5] cluster</name>
        <dbReference type="ChEBI" id="CHEBI:189552"/>
    </ligand>
</feature>
<feature type="binding site" evidence="1">
    <location>
        <position position="344"/>
    </location>
    <ligand>
        <name>[CaMn4O5] cluster</name>
        <dbReference type="ChEBI" id="CHEBI:189552"/>
    </ligand>
</feature>
<feature type="site" description="Tyrosine radical intermediate" evidence="1">
    <location>
        <position position="161"/>
    </location>
</feature>
<feature type="site" description="Stabilizes free radical intermediate" evidence="1">
    <location>
        <position position="190"/>
    </location>
</feature>
<feature type="site" description="Cleavage; by CTPA" evidence="1">
    <location>
        <begin position="344"/>
        <end position="345"/>
    </location>
</feature>
<feature type="modified residue" description="N-acetylthreonine" evidence="1">
    <location>
        <position position="2"/>
    </location>
</feature>
<feature type="modified residue" description="Phosphothreonine" evidence="1">
    <location>
        <position position="2"/>
    </location>
</feature>
<keyword id="KW-0007">Acetylation</keyword>
<keyword id="KW-0106">Calcium</keyword>
<keyword id="KW-0148">Chlorophyll</keyword>
<keyword id="KW-0150">Chloroplast</keyword>
<keyword id="KW-0157">Chromophore</keyword>
<keyword id="KW-0249">Electron transport</keyword>
<keyword id="KW-0359">Herbicide resistance</keyword>
<keyword id="KW-0408">Iron</keyword>
<keyword id="KW-0460">Magnesium</keyword>
<keyword id="KW-0464">Manganese</keyword>
<keyword id="KW-0472">Membrane</keyword>
<keyword id="KW-0479">Metal-binding</keyword>
<keyword id="KW-0560">Oxidoreductase</keyword>
<keyword id="KW-0597">Phosphoprotein</keyword>
<keyword id="KW-0602">Photosynthesis</keyword>
<keyword id="KW-0604">Photosystem II</keyword>
<keyword id="KW-0934">Plastid</keyword>
<keyword id="KW-0793">Thylakoid</keyword>
<keyword id="KW-0812">Transmembrane</keyword>
<keyword id="KW-1133">Transmembrane helix</keyword>
<keyword id="KW-0813">Transport</keyword>
<proteinExistence type="inferred from homology"/>
<evidence type="ECO:0000255" key="1">
    <source>
        <dbReference type="HAMAP-Rule" id="MF_01379"/>
    </source>
</evidence>
<geneLocation type="chloroplast"/>
<sequence length="353" mass="39032">MTAILERRESTSLWARFCEWITSTENRIYIGWFGVIMIPTLLTATSVFIIAFIAAPPVDIDGIREPVSGSLLYGNNIISGAVIPTSNAIGLHFYPIWEAASLDEWLYNGGPYQLIVCHFFIGICCYMGREWELSFRLGMRPWIAVAYSAPVAAATAVFIIYPIGQGSFSDGMPLGISGTFNFMIVFQAEHNILMHPFHMLGVAGVFGGSLFSAMHGSLVTSSLIRETTENESANAGYRFGQEEETYNIVAAHGYFGRLIFQYASFNNSRSLHFFLAAWPVIGIWFTALGLSTMAFNLNGLNFNQSVVDSNGRVLNTWADIINRANLGMEVMHERNAHNFPLDLAAFEAPSINA</sequence>
<gene>
    <name evidence="1" type="primary">psbA</name>
</gene>